<keyword id="KW-0067">ATP-binding</keyword>
<keyword id="KW-0520">NAD</keyword>
<keyword id="KW-0547">Nucleotide-binding</keyword>
<keyword id="KW-0548">Nucleotidyltransferase</keyword>
<keyword id="KW-0662">Pyridine nucleotide biosynthesis</keyword>
<keyword id="KW-1185">Reference proteome</keyword>
<keyword id="KW-0808">Transferase</keyword>
<dbReference type="EC" id="2.7.7.18"/>
<dbReference type="EMBL" id="AE005674">
    <property type="protein sequence ID" value="AAN42278.1"/>
    <property type="molecule type" value="Genomic_DNA"/>
</dbReference>
<dbReference type="EMBL" id="AE014073">
    <property type="protein sequence ID" value="AAP16149.1"/>
    <property type="molecule type" value="Genomic_DNA"/>
</dbReference>
<dbReference type="RefSeq" id="NP_706571.1">
    <property type="nucleotide sequence ID" value="NC_004337.2"/>
</dbReference>
<dbReference type="RefSeq" id="WP_000838889.1">
    <property type="nucleotide sequence ID" value="NZ_WPGW01000002.1"/>
</dbReference>
<dbReference type="SMR" id="P0A753"/>
<dbReference type="STRING" id="198214.SF0642"/>
<dbReference type="DrugBank" id="DB04272">
    <property type="generic name" value="Citric acid"/>
</dbReference>
<dbReference type="PaxDb" id="198214-SF0642"/>
<dbReference type="GeneID" id="1027549"/>
<dbReference type="GeneID" id="93776843"/>
<dbReference type="KEGG" id="sfl:SF0642"/>
<dbReference type="KEGG" id="sfx:S0664"/>
<dbReference type="PATRIC" id="fig|198214.7.peg.749"/>
<dbReference type="HOGENOM" id="CLU_069765_0_0_6"/>
<dbReference type="UniPathway" id="UPA00253">
    <property type="reaction ID" value="UER00332"/>
</dbReference>
<dbReference type="Proteomes" id="UP000001006">
    <property type="component" value="Chromosome"/>
</dbReference>
<dbReference type="Proteomes" id="UP000002673">
    <property type="component" value="Chromosome"/>
</dbReference>
<dbReference type="GO" id="GO:0005524">
    <property type="term" value="F:ATP binding"/>
    <property type="evidence" value="ECO:0007669"/>
    <property type="project" value="UniProtKB-KW"/>
</dbReference>
<dbReference type="GO" id="GO:0004515">
    <property type="term" value="F:nicotinate-nucleotide adenylyltransferase activity"/>
    <property type="evidence" value="ECO:0007669"/>
    <property type="project" value="UniProtKB-UniRule"/>
</dbReference>
<dbReference type="GO" id="GO:0009435">
    <property type="term" value="P:NAD biosynthetic process"/>
    <property type="evidence" value="ECO:0007669"/>
    <property type="project" value="UniProtKB-UniRule"/>
</dbReference>
<dbReference type="CDD" id="cd02165">
    <property type="entry name" value="NMNAT"/>
    <property type="match status" value="1"/>
</dbReference>
<dbReference type="FunFam" id="3.40.50.620:FF:000039">
    <property type="entry name" value="Probable nicotinate-nucleotide adenylyltransferase"/>
    <property type="match status" value="1"/>
</dbReference>
<dbReference type="Gene3D" id="3.40.50.620">
    <property type="entry name" value="HUPs"/>
    <property type="match status" value="1"/>
</dbReference>
<dbReference type="HAMAP" id="MF_00244">
    <property type="entry name" value="NaMN_adenylyltr"/>
    <property type="match status" value="1"/>
</dbReference>
<dbReference type="InterPro" id="IPR004821">
    <property type="entry name" value="Cyt_trans-like"/>
</dbReference>
<dbReference type="InterPro" id="IPR005248">
    <property type="entry name" value="NadD/NMNAT"/>
</dbReference>
<dbReference type="InterPro" id="IPR014729">
    <property type="entry name" value="Rossmann-like_a/b/a_fold"/>
</dbReference>
<dbReference type="NCBIfam" id="TIGR00125">
    <property type="entry name" value="cyt_tran_rel"/>
    <property type="match status" value="1"/>
</dbReference>
<dbReference type="NCBIfam" id="TIGR00482">
    <property type="entry name" value="nicotinate (nicotinamide) nucleotide adenylyltransferase"/>
    <property type="match status" value="1"/>
</dbReference>
<dbReference type="NCBIfam" id="NF000839">
    <property type="entry name" value="PRK00071.1-1"/>
    <property type="match status" value="1"/>
</dbReference>
<dbReference type="NCBIfam" id="NF000840">
    <property type="entry name" value="PRK00071.1-3"/>
    <property type="match status" value="1"/>
</dbReference>
<dbReference type="PANTHER" id="PTHR39321">
    <property type="entry name" value="NICOTINATE-NUCLEOTIDE ADENYLYLTRANSFERASE-RELATED"/>
    <property type="match status" value="1"/>
</dbReference>
<dbReference type="PANTHER" id="PTHR39321:SF3">
    <property type="entry name" value="PHOSPHOPANTETHEINE ADENYLYLTRANSFERASE"/>
    <property type="match status" value="1"/>
</dbReference>
<dbReference type="Pfam" id="PF01467">
    <property type="entry name" value="CTP_transf_like"/>
    <property type="match status" value="1"/>
</dbReference>
<dbReference type="SUPFAM" id="SSF52374">
    <property type="entry name" value="Nucleotidylyl transferase"/>
    <property type="match status" value="1"/>
</dbReference>
<evidence type="ECO:0000250" key="1"/>
<evidence type="ECO:0000305" key="2"/>
<name>NADD_SHIFL</name>
<comment type="function">
    <text evidence="1">Catalyzes the reversible adenylation of nicotinate mononucleotide (NaMN) to nicotinic acid adenine dinucleotide (NaAD).</text>
</comment>
<comment type="catalytic activity">
    <reaction>
        <text>nicotinate beta-D-ribonucleotide + ATP + H(+) = deamido-NAD(+) + diphosphate</text>
        <dbReference type="Rhea" id="RHEA:22860"/>
        <dbReference type="ChEBI" id="CHEBI:15378"/>
        <dbReference type="ChEBI" id="CHEBI:30616"/>
        <dbReference type="ChEBI" id="CHEBI:33019"/>
        <dbReference type="ChEBI" id="CHEBI:57502"/>
        <dbReference type="ChEBI" id="CHEBI:58437"/>
        <dbReference type="EC" id="2.7.7.18"/>
    </reaction>
</comment>
<comment type="pathway">
    <text>Cofactor biosynthesis; NAD(+) biosynthesis; deamido-NAD(+) from nicotinate D-ribonucleotide: step 1/1.</text>
</comment>
<comment type="similarity">
    <text evidence="2">Belongs to the NadD family.</text>
</comment>
<organism>
    <name type="scientific">Shigella flexneri</name>
    <dbReference type="NCBI Taxonomy" id="623"/>
    <lineage>
        <taxon>Bacteria</taxon>
        <taxon>Pseudomonadati</taxon>
        <taxon>Pseudomonadota</taxon>
        <taxon>Gammaproteobacteria</taxon>
        <taxon>Enterobacterales</taxon>
        <taxon>Enterobacteriaceae</taxon>
        <taxon>Shigella</taxon>
    </lineage>
</organism>
<proteinExistence type="inferred from homology"/>
<reference key="1">
    <citation type="journal article" date="2002" name="Nucleic Acids Res.">
        <title>Genome sequence of Shigella flexneri 2a: insights into pathogenicity through comparison with genomes of Escherichia coli K12 and O157.</title>
        <authorList>
            <person name="Jin Q."/>
            <person name="Yuan Z."/>
            <person name="Xu J."/>
            <person name="Wang Y."/>
            <person name="Shen Y."/>
            <person name="Lu W."/>
            <person name="Wang J."/>
            <person name="Liu H."/>
            <person name="Yang J."/>
            <person name="Yang F."/>
            <person name="Zhang X."/>
            <person name="Zhang J."/>
            <person name="Yang G."/>
            <person name="Wu H."/>
            <person name="Qu D."/>
            <person name="Dong J."/>
            <person name="Sun L."/>
            <person name="Xue Y."/>
            <person name="Zhao A."/>
            <person name="Gao Y."/>
            <person name="Zhu J."/>
            <person name="Kan B."/>
            <person name="Ding K."/>
            <person name="Chen S."/>
            <person name="Cheng H."/>
            <person name="Yao Z."/>
            <person name="He B."/>
            <person name="Chen R."/>
            <person name="Ma D."/>
            <person name="Qiang B."/>
            <person name="Wen Y."/>
            <person name="Hou Y."/>
            <person name="Yu J."/>
        </authorList>
    </citation>
    <scope>NUCLEOTIDE SEQUENCE [LARGE SCALE GENOMIC DNA]</scope>
    <source>
        <strain>301 / Serotype 2a</strain>
    </source>
</reference>
<reference key="2">
    <citation type="journal article" date="2003" name="Infect. Immun.">
        <title>Complete genome sequence and comparative genomics of Shigella flexneri serotype 2a strain 2457T.</title>
        <authorList>
            <person name="Wei J."/>
            <person name="Goldberg M.B."/>
            <person name="Burland V."/>
            <person name="Venkatesan M.M."/>
            <person name="Deng W."/>
            <person name="Fournier G."/>
            <person name="Mayhew G.F."/>
            <person name="Plunkett G. III"/>
            <person name="Rose D.J."/>
            <person name="Darling A."/>
            <person name="Mau B."/>
            <person name="Perna N.T."/>
            <person name="Payne S.M."/>
            <person name="Runyen-Janecky L.J."/>
            <person name="Zhou S."/>
            <person name="Schwartz D.C."/>
            <person name="Blattner F.R."/>
        </authorList>
    </citation>
    <scope>NUCLEOTIDE SEQUENCE [LARGE SCALE GENOMIC DNA]</scope>
    <source>
        <strain>ATCC 700930 / 2457T / Serotype 2a</strain>
    </source>
</reference>
<sequence length="213" mass="24528">MKSLQALFGGTFDPVHYGHLKPVETLANLIGLTRVTIIPNNVPPHRPQPEANSVQRKHMLELAIADKPLFTLDERELKRNAPSYTAQTLKEWRQEQGPDVPLAFIIGQDSLLTFPTWYEYETILDNAHLIVCRRPGYPLEMAQPQYQQWLEDHLTHNPEDLHLQPAGKIYLAETPWFNISATIIRERLQNGESCEDLLPEPVLTYINQQGLYR</sequence>
<feature type="chain" id="PRO_0000181441" description="Nicotinate-nucleotide adenylyltransferase">
    <location>
        <begin position="1"/>
        <end position="213"/>
    </location>
</feature>
<accession>P0A753</accession>
<accession>P52085</accession>
<gene>
    <name type="primary">nadD</name>
    <name type="ordered locus">SF0642</name>
    <name type="ordered locus">S0664</name>
</gene>
<protein>
    <recommendedName>
        <fullName>Nicotinate-nucleotide adenylyltransferase</fullName>
        <ecNumber>2.7.7.18</ecNumber>
    </recommendedName>
    <alternativeName>
        <fullName>Deamido-NAD(+) diphosphorylase</fullName>
    </alternativeName>
    <alternativeName>
        <fullName>Deamido-NAD(+) pyrophosphorylase</fullName>
    </alternativeName>
    <alternativeName>
        <fullName>Nicotinate mononucleotide adenylyltransferase</fullName>
        <shortName>NaMN adenylyltransferase</shortName>
    </alternativeName>
</protein>